<organism>
    <name type="scientific">Clostridium botulinum (strain 657 / Type Ba4)</name>
    <dbReference type="NCBI Taxonomy" id="515621"/>
    <lineage>
        <taxon>Bacteria</taxon>
        <taxon>Bacillati</taxon>
        <taxon>Bacillota</taxon>
        <taxon>Clostridia</taxon>
        <taxon>Eubacteriales</taxon>
        <taxon>Clostridiaceae</taxon>
        <taxon>Clostridium</taxon>
    </lineage>
</organism>
<gene>
    <name evidence="1" type="primary">nadK</name>
    <name type="ordered locus">CLJ_B2066</name>
</gene>
<keyword id="KW-0067">ATP-binding</keyword>
<keyword id="KW-0963">Cytoplasm</keyword>
<keyword id="KW-0418">Kinase</keyword>
<keyword id="KW-0520">NAD</keyword>
<keyword id="KW-0521">NADP</keyword>
<keyword id="KW-0547">Nucleotide-binding</keyword>
<keyword id="KW-0808">Transferase</keyword>
<reference key="1">
    <citation type="submission" date="2008-05" db="EMBL/GenBank/DDBJ databases">
        <title>Genome sequence of Clostridium botulinum Ba4 strain 657.</title>
        <authorList>
            <person name="Shrivastava S."/>
            <person name="Brown J.L."/>
            <person name="Bruce D."/>
            <person name="Detter C."/>
            <person name="Munk C."/>
            <person name="Smith L.A."/>
            <person name="Smith T.J."/>
            <person name="Sutton G."/>
            <person name="Brettin T.S."/>
        </authorList>
    </citation>
    <scope>NUCLEOTIDE SEQUENCE [LARGE SCALE GENOMIC DNA]</scope>
    <source>
        <strain>657 / Type Ba4</strain>
    </source>
</reference>
<evidence type="ECO:0000255" key="1">
    <source>
        <dbReference type="HAMAP-Rule" id="MF_00361"/>
    </source>
</evidence>
<feature type="chain" id="PRO_1000205412" description="NAD kinase">
    <location>
        <begin position="1"/>
        <end position="281"/>
    </location>
</feature>
<feature type="active site" description="Proton acceptor" evidence="1">
    <location>
        <position position="61"/>
    </location>
</feature>
<feature type="binding site" evidence="1">
    <location>
        <begin position="61"/>
        <end position="62"/>
    </location>
    <ligand>
        <name>NAD(+)</name>
        <dbReference type="ChEBI" id="CHEBI:57540"/>
    </ligand>
</feature>
<feature type="binding site" evidence="1">
    <location>
        <begin position="134"/>
        <end position="135"/>
    </location>
    <ligand>
        <name>NAD(+)</name>
        <dbReference type="ChEBI" id="CHEBI:57540"/>
    </ligand>
</feature>
<feature type="binding site" evidence="1">
    <location>
        <position position="145"/>
    </location>
    <ligand>
        <name>NAD(+)</name>
        <dbReference type="ChEBI" id="CHEBI:57540"/>
    </ligand>
</feature>
<feature type="binding site" evidence="1">
    <location>
        <position position="164"/>
    </location>
    <ligand>
        <name>NAD(+)</name>
        <dbReference type="ChEBI" id="CHEBI:57540"/>
    </ligand>
</feature>
<feature type="binding site" evidence="1">
    <location>
        <begin position="175"/>
        <end position="180"/>
    </location>
    <ligand>
        <name>NAD(+)</name>
        <dbReference type="ChEBI" id="CHEBI:57540"/>
    </ligand>
</feature>
<feature type="binding site" evidence="1">
    <location>
        <position position="234"/>
    </location>
    <ligand>
        <name>NAD(+)</name>
        <dbReference type="ChEBI" id="CHEBI:57540"/>
    </ligand>
</feature>
<name>NADK_CLOB6</name>
<protein>
    <recommendedName>
        <fullName evidence="1">NAD kinase</fullName>
        <ecNumber evidence="1">2.7.1.23</ecNumber>
    </recommendedName>
    <alternativeName>
        <fullName evidence="1">ATP-dependent NAD kinase</fullName>
    </alternativeName>
</protein>
<dbReference type="EC" id="2.7.1.23" evidence="1"/>
<dbReference type="EMBL" id="CP001083">
    <property type="protein sequence ID" value="ACQ53219.1"/>
    <property type="molecule type" value="Genomic_DNA"/>
</dbReference>
<dbReference type="RefSeq" id="WP_003362512.1">
    <property type="nucleotide sequence ID" value="NC_012658.1"/>
</dbReference>
<dbReference type="SMR" id="C3KXC0"/>
<dbReference type="KEGG" id="cbi:CLJ_B2066"/>
<dbReference type="HOGENOM" id="CLU_008831_0_1_9"/>
<dbReference type="Proteomes" id="UP000002333">
    <property type="component" value="Chromosome"/>
</dbReference>
<dbReference type="GO" id="GO:0005737">
    <property type="term" value="C:cytoplasm"/>
    <property type="evidence" value="ECO:0007669"/>
    <property type="project" value="UniProtKB-SubCell"/>
</dbReference>
<dbReference type="GO" id="GO:0005524">
    <property type="term" value="F:ATP binding"/>
    <property type="evidence" value="ECO:0007669"/>
    <property type="project" value="UniProtKB-KW"/>
</dbReference>
<dbReference type="GO" id="GO:0046872">
    <property type="term" value="F:metal ion binding"/>
    <property type="evidence" value="ECO:0007669"/>
    <property type="project" value="UniProtKB-UniRule"/>
</dbReference>
<dbReference type="GO" id="GO:0051287">
    <property type="term" value="F:NAD binding"/>
    <property type="evidence" value="ECO:0007669"/>
    <property type="project" value="UniProtKB-ARBA"/>
</dbReference>
<dbReference type="GO" id="GO:0003951">
    <property type="term" value="F:NAD+ kinase activity"/>
    <property type="evidence" value="ECO:0007669"/>
    <property type="project" value="UniProtKB-UniRule"/>
</dbReference>
<dbReference type="GO" id="GO:0019674">
    <property type="term" value="P:NAD metabolic process"/>
    <property type="evidence" value="ECO:0007669"/>
    <property type="project" value="InterPro"/>
</dbReference>
<dbReference type="GO" id="GO:0006741">
    <property type="term" value="P:NADP biosynthetic process"/>
    <property type="evidence" value="ECO:0007669"/>
    <property type="project" value="UniProtKB-UniRule"/>
</dbReference>
<dbReference type="FunFam" id="2.60.200.30:FF:000011">
    <property type="entry name" value="NAD kinase"/>
    <property type="match status" value="1"/>
</dbReference>
<dbReference type="Gene3D" id="3.40.50.10330">
    <property type="entry name" value="Probable inorganic polyphosphate/atp-NAD kinase, domain 1"/>
    <property type="match status" value="1"/>
</dbReference>
<dbReference type="Gene3D" id="2.60.200.30">
    <property type="entry name" value="Probable inorganic polyphosphate/atp-NAD kinase, domain 2"/>
    <property type="match status" value="1"/>
</dbReference>
<dbReference type="HAMAP" id="MF_00361">
    <property type="entry name" value="NAD_kinase"/>
    <property type="match status" value="1"/>
</dbReference>
<dbReference type="InterPro" id="IPR017438">
    <property type="entry name" value="ATP-NAD_kinase_N"/>
</dbReference>
<dbReference type="InterPro" id="IPR017437">
    <property type="entry name" value="ATP-NAD_kinase_PpnK-typ_C"/>
</dbReference>
<dbReference type="InterPro" id="IPR016064">
    <property type="entry name" value="NAD/diacylglycerol_kinase_sf"/>
</dbReference>
<dbReference type="InterPro" id="IPR002504">
    <property type="entry name" value="NADK"/>
</dbReference>
<dbReference type="PANTHER" id="PTHR20275">
    <property type="entry name" value="NAD KINASE"/>
    <property type="match status" value="1"/>
</dbReference>
<dbReference type="PANTHER" id="PTHR20275:SF0">
    <property type="entry name" value="NAD KINASE"/>
    <property type="match status" value="1"/>
</dbReference>
<dbReference type="Pfam" id="PF01513">
    <property type="entry name" value="NAD_kinase"/>
    <property type="match status" value="1"/>
</dbReference>
<dbReference type="Pfam" id="PF20143">
    <property type="entry name" value="NAD_kinase_C"/>
    <property type="match status" value="1"/>
</dbReference>
<dbReference type="SUPFAM" id="SSF111331">
    <property type="entry name" value="NAD kinase/diacylglycerol kinase-like"/>
    <property type="match status" value="1"/>
</dbReference>
<proteinExistence type="inferred from homology"/>
<sequence length="281" mass="31689">MKNIGININTDKDISRNILDKIFQYIHEECSEAKIKVFYDSKGLDNEESRALDAVMVLGGDGTILGTARALAKYDVPIFGINRGHLGFLAEIELEDCKKAIKNLFKGQYKIEDRIMLKCDLKGIDKKDDFLALNDIVLTKGNLSRIVKYSIYVDDVWYTTFVADGVIVATPTGSTAYSLSAGGPIVYPDLDVLEIAPICPHSLGIRPILLNGNSKINIRVLKKYEDPVLTIDGQRYKKVTVNEVTISKSKYKCRLIKFKDKDYFKILRTKISYRSRECEGE</sequence>
<accession>C3KXC0</accession>
<comment type="function">
    <text evidence="1">Involved in the regulation of the intracellular balance of NAD and NADP, and is a key enzyme in the biosynthesis of NADP. Catalyzes specifically the phosphorylation on 2'-hydroxyl of the adenosine moiety of NAD to yield NADP.</text>
</comment>
<comment type="catalytic activity">
    <reaction evidence="1">
        <text>NAD(+) + ATP = ADP + NADP(+) + H(+)</text>
        <dbReference type="Rhea" id="RHEA:18629"/>
        <dbReference type="ChEBI" id="CHEBI:15378"/>
        <dbReference type="ChEBI" id="CHEBI:30616"/>
        <dbReference type="ChEBI" id="CHEBI:57540"/>
        <dbReference type="ChEBI" id="CHEBI:58349"/>
        <dbReference type="ChEBI" id="CHEBI:456216"/>
        <dbReference type="EC" id="2.7.1.23"/>
    </reaction>
</comment>
<comment type="cofactor">
    <cofactor evidence="1">
        <name>a divalent metal cation</name>
        <dbReference type="ChEBI" id="CHEBI:60240"/>
    </cofactor>
</comment>
<comment type="subcellular location">
    <subcellularLocation>
        <location evidence="1">Cytoplasm</location>
    </subcellularLocation>
</comment>
<comment type="similarity">
    <text evidence="1">Belongs to the NAD kinase family.</text>
</comment>